<dbReference type="EC" id="6.2.1.26" evidence="1"/>
<dbReference type="EMBL" id="BA000033">
    <property type="protein sequence ID" value="BAB95600.1"/>
    <property type="molecule type" value="Genomic_DNA"/>
</dbReference>
<dbReference type="RefSeq" id="WP_000348356.1">
    <property type="nucleotide sequence ID" value="NC_003923.1"/>
</dbReference>
<dbReference type="SMR" id="Q8NVZ4"/>
<dbReference type="KEGG" id="sam:MW1735"/>
<dbReference type="HOGENOM" id="CLU_000022_59_0_9"/>
<dbReference type="UniPathway" id="UPA00079"/>
<dbReference type="UniPathway" id="UPA01057">
    <property type="reaction ID" value="UER00166"/>
</dbReference>
<dbReference type="GO" id="GO:0005524">
    <property type="term" value="F:ATP binding"/>
    <property type="evidence" value="ECO:0007669"/>
    <property type="project" value="UniProtKB-KW"/>
</dbReference>
<dbReference type="GO" id="GO:0008756">
    <property type="term" value="F:o-succinylbenzoate-CoA ligase activity"/>
    <property type="evidence" value="ECO:0007669"/>
    <property type="project" value="UniProtKB-UniRule"/>
</dbReference>
<dbReference type="GO" id="GO:0009234">
    <property type="term" value="P:menaquinone biosynthetic process"/>
    <property type="evidence" value="ECO:0007669"/>
    <property type="project" value="UniProtKB-UniRule"/>
</dbReference>
<dbReference type="CDD" id="cd05912">
    <property type="entry name" value="OSB_CoA_lg"/>
    <property type="match status" value="1"/>
</dbReference>
<dbReference type="Gene3D" id="3.30.300.30">
    <property type="match status" value="1"/>
</dbReference>
<dbReference type="Gene3D" id="3.40.50.12780">
    <property type="entry name" value="N-terminal domain of ligase-like"/>
    <property type="match status" value="1"/>
</dbReference>
<dbReference type="HAMAP" id="MF_00731">
    <property type="entry name" value="MenE"/>
    <property type="match status" value="1"/>
</dbReference>
<dbReference type="InterPro" id="IPR025110">
    <property type="entry name" value="AMP-bd_C"/>
</dbReference>
<dbReference type="InterPro" id="IPR045851">
    <property type="entry name" value="AMP-bd_C_sf"/>
</dbReference>
<dbReference type="InterPro" id="IPR000873">
    <property type="entry name" value="AMP-dep_synth/lig_dom"/>
</dbReference>
<dbReference type="InterPro" id="IPR042099">
    <property type="entry name" value="ANL_N_sf"/>
</dbReference>
<dbReference type="InterPro" id="IPR050237">
    <property type="entry name" value="ATP-dep_AMP-bd_enzyme"/>
</dbReference>
<dbReference type="InterPro" id="IPR010192">
    <property type="entry name" value="MenE"/>
</dbReference>
<dbReference type="NCBIfam" id="TIGR01923">
    <property type="entry name" value="menE"/>
    <property type="match status" value="1"/>
</dbReference>
<dbReference type="PANTHER" id="PTHR43767">
    <property type="entry name" value="LONG-CHAIN-FATTY-ACID--COA LIGASE"/>
    <property type="match status" value="1"/>
</dbReference>
<dbReference type="PANTHER" id="PTHR43767:SF1">
    <property type="entry name" value="NONRIBOSOMAL PEPTIDE SYNTHASE PES1 (EUROFUNG)-RELATED"/>
    <property type="match status" value="1"/>
</dbReference>
<dbReference type="Pfam" id="PF00501">
    <property type="entry name" value="AMP-binding"/>
    <property type="match status" value="1"/>
</dbReference>
<dbReference type="Pfam" id="PF13193">
    <property type="entry name" value="AMP-binding_C"/>
    <property type="match status" value="1"/>
</dbReference>
<dbReference type="SUPFAM" id="SSF56801">
    <property type="entry name" value="Acetyl-CoA synthetase-like"/>
    <property type="match status" value="1"/>
</dbReference>
<keyword id="KW-0067">ATP-binding</keyword>
<keyword id="KW-0436">Ligase</keyword>
<keyword id="KW-0474">Menaquinone biosynthesis</keyword>
<keyword id="KW-0547">Nucleotide-binding</keyword>
<comment type="function">
    <text evidence="1">Converts 2-succinylbenzoate (OSB) to 2-succinylbenzoyl-CoA (OSB-CoA).</text>
</comment>
<comment type="catalytic activity">
    <reaction evidence="1">
        <text>2-succinylbenzoate + ATP + CoA = 2-succinylbenzoyl-CoA + AMP + diphosphate</text>
        <dbReference type="Rhea" id="RHEA:17009"/>
        <dbReference type="ChEBI" id="CHEBI:18325"/>
        <dbReference type="ChEBI" id="CHEBI:30616"/>
        <dbReference type="ChEBI" id="CHEBI:33019"/>
        <dbReference type="ChEBI" id="CHEBI:57287"/>
        <dbReference type="ChEBI" id="CHEBI:57364"/>
        <dbReference type="ChEBI" id="CHEBI:456215"/>
        <dbReference type="EC" id="6.2.1.26"/>
    </reaction>
</comment>
<comment type="pathway">
    <text evidence="1">Quinol/quinone metabolism; 1,4-dihydroxy-2-naphthoate biosynthesis; 1,4-dihydroxy-2-naphthoate from chorismate: step 5/7.</text>
</comment>
<comment type="pathway">
    <text evidence="1">Quinol/quinone metabolism; menaquinone biosynthesis.</text>
</comment>
<comment type="similarity">
    <text evidence="1">Belongs to the ATP-dependent AMP-binding enzyme family. MenE subfamily.</text>
</comment>
<gene>
    <name evidence="1" type="primary">menE</name>
    <name type="ordered locus">MW1735</name>
</gene>
<proteinExistence type="inferred from homology"/>
<evidence type="ECO:0000255" key="1">
    <source>
        <dbReference type="HAMAP-Rule" id="MF_00731"/>
    </source>
</evidence>
<protein>
    <recommendedName>
        <fullName evidence="1">2-succinylbenzoate--CoA ligase</fullName>
        <ecNumber evidence="1">6.2.1.26</ecNumber>
    </recommendedName>
    <alternativeName>
        <fullName evidence="1">o-succinylbenzoyl-CoA synthetase</fullName>
        <shortName evidence="1">OSB-CoA synthetase</shortName>
    </alternativeName>
</protein>
<feature type="chain" id="PRO_0000193172" description="2-succinylbenzoate--CoA ligase">
    <location>
        <begin position="1"/>
        <end position="492"/>
    </location>
</feature>
<name>MENE_STAAW</name>
<reference key="1">
    <citation type="journal article" date="2002" name="Lancet">
        <title>Genome and virulence determinants of high virulence community-acquired MRSA.</title>
        <authorList>
            <person name="Baba T."/>
            <person name="Takeuchi F."/>
            <person name="Kuroda M."/>
            <person name="Yuzawa H."/>
            <person name="Aoki K."/>
            <person name="Oguchi A."/>
            <person name="Nagai Y."/>
            <person name="Iwama N."/>
            <person name="Asano K."/>
            <person name="Naimi T."/>
            <person name="Kuroda H."/>
            <person name="Cui L."/>
            <person name="Yamamoto K."/>
            <person name="Hiramatsu K."/>
        </authorList>
    </citation>
    <scope>NUCLEOTIDE SEQUENCE [LARGE SCALE GENOMIC DNA]</scope>
    <source>
        <strain>MW2</strain>
    </source>
</reference>
<organism>
    <name type="scientific">Staphylococcus aureus (strain MW2)</name>
    <dbReference type="NCBI Taxonomy" id="196620"/>
    <lineage>
        <taxon>Bacteria</taxon>
        <taxon>Bacillati</taxon>
        <taxon>Bacillota</taxon>
        <taxon>Bacilli</taxon>
        <taxon>Bacillales</taxon>
        <taxon>Staphylococcaceae</taxon>
        <taxon>Staphylococcus</taxon>
    </lineage>
</organism>
<sequence>MDFWLYKQAQQNGHHIAITDGQESYTYQNLYCEASLLAKRLKAYQQSRVGLYIDNSIQSIILIHACWLANIEIAMINTRLTPNEMKNQMRSIDVQLIFCTLPLELRGFQIVSLDDIEFAGTDITMNGLLDNTMDIQYDTSNETVVPKESPSNILNTSFNLDDIASIMFTSGTTGPQKAVPQTFRNHYASAIGCKESLGFDRDTNWLSVLPIYHISGLSVLLRAVIEGFTVRIVDKFNAEQILTIIKNERITHISLVPQTLNWLMQQGLHEPYNLQKILLGGAKLSATLIETALQYNLPIYNSFGMTETCSQFLTATPEMLHARPDTVGMPSANVDVKIKNPNKEGHGELMIKGANVMNGYLYPTDLTGTFENGYFNTGDIAEIDHEGYVMIYDRRKDLIISGGENIYPYQIETVAKQFPGISDAVCVGHPDDTWGQVPKLYFVSESDISKAQLIAYLSQHLAKYKVPKHFEKVDTLPYTSTGKLQRNKLYRG</sequence>
<accession>Q8NVZ4</accession>